<sequence>MRLAVIAGDGIGPEVITEALKVLDAVLPGVEKTEYDLGARQYHKTGEVLPDSVLEELKGHDAILLGAIGDPSVPSGLLERGLLLRIRFELDHHINLRPARLYPGVQSPLAGNPEIDFVVVREGTEGPYTGNGGAIRVGTPHEIATEVSVNTAFGVRRAVQDAFGRAQQRRKHLTLVHKNNVLTNAGSLWWRTVQTVAAEYPDVEVAYQHVDAATIHMVTDPGRFDVIVTDNLFGDIITDLAAAVCGGIGLAASGNIDATLTHPSMFEPVHGSAPDIAGQGIADPTAAVMSVSLLLAHMAEVDAAARVDKAVAEHLATRGDEKLSTAAVGERILGKL</sequence>
<organism>
    <name type="scientific">Mycolicibacterium vanbaalenii (strain DSM 7251 / JCM 13017 / BCRC 16820 / KCTC 9966 / NRRL B-24157 / PYR-1)</name>
    <name type="common">Mycobacterium vanbaalenii</name>
    <dbReference type="NCBI Taxonomy" id="350058"/>
    <lineage>
        <taxon>Bacteria</taxon>
        <taxon>Bacillati</taxon>
        <taxon>Actinomycetota</taxon>
        <taxon>Actinomycetes</taxon>
        <taxon>Mycobacteriales</taxon>
        <taxon>Mycobacteriaceae</taxon>
        <taxon>Mycolicibacterium</taxon>
    </lineage>
</organism>
<name>LEU3_MYCVP</name>
<evidence type="ECO:0000255" key="1">
    <source>
        <dbReference type="HAMAP-Rule" id="MF_01035"/>
    </source>
</evidence>
<dbReference type="EC" id="1.1.1.85" evidence="1"/>
<dbReference type="EMBL" id="CP000511">
    <property type="protein sequence ID" value="ABM12944.1"/>
    <property type="molecule type" value="Genomic_DNA"/>
</dbReference>
<dbReference type="RefSeq" id="WP_011779358.1">
    <property type="nucleotide sequence ID" value="NZ_JACKSD010000243.1"/>
</dbReference>
<dbReference type="SMR" id="A1T6Z4"/>
<dbReference type="STRING" id="350058.Mvan_2129"/>
<dbReference type="KEGG" id="mva:Mvan_2129"/>
<dbReference type="eggNOG" id="COG0473">
    <property type="taxonomic scope" value="Bacteria"/>
</dbReference>
<dbReference type="HOGENOM" id="CLU_031953_0_1_11"/>
<dbReference type="UniPathway" id="UPA00048">
    <property type="reaction ID" value="UER00072"/>
</dbReference>
<dbReference type="Proteomes" id="UP000009159">
    <property type="component" value="Chromosome"/>
</dbReference>
<dbReference type="GO" id="GO:0005737">
    <property type="term" value="C:cytoplasm"/>
    <property type="evidence" value="ECO:0007669"/>
    <property type="project" value="UniProtKB-SubCell"/>
</dbReference>
<dbReference type="GO" id="GO:0003862">
    <property type="term" value="F:3-isopropylmalate dehydrogenase activity"/>
    <property type="evidence" value="ECO:0007669"/>
    <property type="project" value="UniProtKB-UniRule"/>
</dbReference>
<dbReference type="GO" id="GO:0000287">
    <property type="term" value="F:magnesium ion binding"/>
    <property type="evidence" value="ECO:0007669"/>
    <property type="project" value="InterPro"/>
</dbReference>
<dbReference type="GO" id="GO:0051287">
    <property type="term" value="F:NAD binding"/>
    <property type="evidence" value="ECO:0007669"/>
    <property type="project" value="InterPro"/>
</dbReference>
<dbReference type="GO" id="GO:0009098">
    <property type="term" value="P:L-leucine biosynthetic process"/>
    <property type="evidence" value="ECO:0007669"/>
    <property type="project" value="UniProtKB-UniRule"/>
</dbReference>
<dbReference type="Gene3D" id="3.40.718.10">
    <property type="entry name" value="Isopropylmalate Dehydrogenase"/>
    <property type="match status" value="1"/>
</dbReference>
<dbReference type="HAMAP" id="MF_01035">
    <property type="entry name" value="LeuB_type2"/>
    <property type="match status" value="1"/>
</dbReference>
<dbReference type="InterPro" id="IPR050501">
    <property type="entry name" value="ICDH/IPMDH"/>
</dbReference>
<dbReference type="InterPro" id="IPR019818">
    <property type="entry name" value="IsoCit/isopropylmalate_DH_CS"/>
</dbReference>
<dbReference type="InterPro" id="IPR024084">
    <property type="entry name" value="IsoPropMal-DH-like_dom"/>
</dbReference>
<dbReference type="InterPro" id="IPR023698">
    <property type="entry name" value="LeuB_actb"/>
</dbReference>
<dbReference type="NCBIfam" id="NF002898">
    <property type="entry name" value="PRK03437.1"/>
    <property type="match status" value="1"/>
</dbReference>
<dbReference type="PANTHER" id="PTHR43275">
    <property type="entry name" value="D-MALATE DEHYDROGENASE [DECARBOXYLATING]"/>
    <property type="match status" value="1"/>
</dbReference>
<dbReference type="PANTHER" id="PTHR43275:SF1">
    <property type="entry name" value="D-MALATE DEHYDROGENASE [DECARBOXYLATING]"/>
    <property type="match status" value="1"/>
</dbReference>
<dbReference type="Pfam" id="PF00180">
    <property type="entry name" value="Iso_dh"/>
    <property type="match status" value="1"/>
</dbReference>
<dbReference type="SMART" id="SM01329">
    <property type="entry name" value="Iso_dh"/>
    <property type="match status" value="1"/>
</dbReference>
<dbReference type="SUPFAM" id="SSF53659">
    <property type="entry name" value="Isocitrate/Isopropylmalate dehydrogenase-like"/>
    <property type="match status" value="1"/>
</dbReference>
<dbReference type="PROSITE" id="PS00470">
    <property type="entry name" value="IDH_IMDH"/>
    <property type="match status" value="1"/>
</dbReference>
<proteinExistence type="inferred from homology"/>
<comment type="function">
    <text evidence="1">Catalyzes the oxidation of 3-carboxy-2-hydroxy-4-methylpentanoate (3-isopropylmalate) to 3-carboxy-4-methyl-2-oxopentanoate. The product decarboxylates to 4-methyl-2 oxopentanoate.</text>
</comment>
<comment type="catalytic activity">
    <reaction evidence="1">
        <text>(2R,3S)-3-isopropylmalate + NAD(+) = 4-methyl-2-oxopentanoate + CO2 + NADH</text>
        <dbReference type="Rhea" id="RHEA:32271"/>
        <dbReference type="ChEBI" id="CHEBI:16526"/>
        <dbReference type="ChEBI" id="CHEBI:17865"/>
        <dbReference type="ChEBI" id="CHEBI:35121"/>
        <dbReference type="ChEBI" id="CHEBI:57540"/>
        <dbReference type="ChEBI" id="CHEBI:57945"/>
        <dbReference type="EC" id="1.1.1.85"/>
    </reaction>
</comment>
<comment type="cofactor">
    <cofactor evidence="1">
        <name>Mg(2+)</name>
        <dbReference type="ChEBI" id="CHEBI:18420"/>
    </cofactor>
    <cofactor evidence="1">
        <name>Mn(2+)</name>
        <dbReference type="ChEBI" id="CHEBI:29035"/>
    </cofactor>
    <text evidence="1">Binds 1 Mg(2+) or Mn(2+) ion per subunit.</text>
</comment>
<comment type="pathway">
    <text evidence="1">Amino-acid biosynthesis; L-leucine biosynthesis; L-leucine from 3-methyl-2-oxobutanoate: step 3/4.</text>
</comment>
<comment type="subunit">
    <text evidence="1">Homodimer.</text>
</comment>
<comment type="subcellular location">
    <subcellularLocation>
        <location evidence="1">Cytoplasm</location>
    </subcellularLocation>
</comment>
<comment type="similarity">
    <text evidence="1">Belongs to the isocitrate and isopropylmalate dehydrogenases family. LeuB type 2 subfamily.</text>
</comment>
<feature type="chain" id="PRO_1000063878" description="3-isopropylmalate dehydrogenase">
    <location>
        <begin position="1"/>
        <end position="336"/>
    </location>
</feature>
<feature type="binding site" evidence="1">
    <location>
        <position position="87"/>
    </location>
    <ligand>
        <name>substrate</name>
    </ligand>
</feature>
<feature type="binding site" evidence="1">
    <location>
        <position position="97"/>
    </location>
    <ligand>
        <name>substrate</name>
    </ligand>
</feature>
<feature type="binding site" evidence="1">
    <location>
        <position position="121"/>
    </location>
    <ligand>
        <name>substrate</name>
    </ligand>
</feature>
<feature type="binding site" evidence="1">
    <location>
        <position position="211"/>
    </location>
    <ligand>
        <name>Mg(2+)</name>
        <dbReference type="ChEBI" id="CHEBI:18420"/>
    </ligand>
</feature>
<feature type="binding site" evidence="1">
    <location>
        <position position="211"/>
    </location>
    <ligand>
        <name>substrate</name>
    </ligand>
</feature>
<feature type="binding site" evidence="1">
    <location>
        <position position="235"/>
    </location>
    <ligand>
        <name>Mg(2+)</name>
        <dbReference type="ChEBI" id="CHEBI:18420"/>
    </ligand>
</feature>
<feature type="binding site" evidence="1">
    <location>
        <position position="239"/>
    </location>
    <ligand>
        <name>Mg(2+)</name>
        <dbReference type="ChEBI" id="CHEBI:18420"/>
    </ligand>
</feature>
<feature type="binding site" evidence="1">
    <location>
        <begin position="271"/>
        <end position="283"/>
    </location>
    <ligand>
        <name>NAD(+)</name>
        <dbReference type="ChEBI" id="CHEBI:57540"/>
    </ligand>
</feature>
<feature type="site" description="Important for catalysis" evidence="1">
    <location>
        <position position="128"/>
    </location>
</feature>
<feature type="site" description="Important for catalysis" evidence="1">
    <location>
        <position position="178"/>
    </location>
</feature>
<reference key="1">
    <citation type="submission" date="2006-12" db="EMBL/GenBank/DDBJ databases">
        <title>Complete sequence of Mycobacterium vanbaalenii PYR-1.</title>
        <authorList>
            <consortium name="US DOE Joint Genome Institute"/>
            <person name="Copeland A."/>
            <person name="Lucas S."/>
            <person name="Lapidus A."/>
            <person name="Barry K."/>
            <person name="Detter J.C."/>
            <person name="Glavina del Rio T."/>
            <person name="Hammon N."/>
            <person name="Israni S."/>
            <person name="Dalin E."/>
            <person name="Tice H."/>
            <person name="Pitluck S."/>
            <person name="Singan V."/>
            <person name="Schmutz J."/>
            <person name="Larimer F."/>
            <person name="Land M."/>
            <person name="Hauser L."/>
            <person name="Kyrpides N."/>
            <person name="Anderson I.J."/>
            <person name="Miller C."/>
            <person name="Richardson P."/>
        </authorList>
    </citation>
    <scope>NUCLEOTIDE SEQUENCE [LARGE SCALE GENOMIC DNA]</scope>
    <source>
        <strain>DSM 7251 / JCM 13017 / BCRC 16820 / KCTC 9966 / NRRL B-24157 / PYR-1</strain>
    </source>
</reference>
<protein>
    <recommendedName>
        <fullName evidence="1">3-isopropylmalate dehydrogenase</fullName>
        <ecNumber evidence="1">1.1.1.85</ecNumber>
    </recommendedName>
    <alternativeName>
        <fullName evidence="1">3-IPM-DH</fullName>
    </alternativeName>
    <alternativeName>
        <fullName evidence="1">Beta-IPM dehydrogenase</fullName>
        <shortName evidence="1">IMDH</shortName>
    </alternativeName>
</protein>
<accession>A1T6Z4</accession>
<keyword id="KW-0028">Amino-acid biosynthesis</keyword>
<keyword id="KW-0100">Branched-chain amino acid biosynthesis</keyword>
<keyword id="KW-0963">Cytoplasm</keyword>
<keyword id="KW-0432">Leucine biosynthesis</keyword>
<keyword id="KW-0460">Magnesium</keyword>
<keyword id="KW-0464">Manganese</keyword>
<keyword id="KW-0479">Metal-binding</keyword>
<keyword id="KW-0520">NAD</keyword>
<keyword id="KW-0560">Oxidoreductase</keyword>
<gene>
    <name evidence="1" type="primary">leuB</name>
    <name type="ordered locus">Mvan_2129</name>
</gene>